<reference key="1">
    <citation type="journal article" date="2003" name="Proc. Natl. Acad. Sci. U.S.A.">
        <title>The complete genome sequence of Chromobacterium violaceum reveals remarkable and exploitable bacterial adaptability.</title>
        <authorList>
            <person name="Vasconcelos A.T.R."/>
            <person name="de Almeida D.F."/>
            <person name="Hungria M."/>
            <person name="Guimaraes C.T."/>
            <person name="Antonio R.V."/>
            <person name="Almeida F.C."/>
            <person name="de Almeida L.G.P."/>
            <person name="de Almeida R."/>
            <person name="Alves-Gomes J.A."/>
            <person name="Andrade E.M."/>
            <person name="Araripe J."/>
            <person name="de Araujo M.F.F."/>
            <person name="Astolfi-Filho S."/>
            <person name="Azevedo V."/>
            <person name="Baptista A.J."/>
            <person name="Bataus L.A.M."/>
            <person name="Batista J.S."/>
            <person name="Belo A."/>
            <person name="van den Berg C."/>
            <person name="Bogo M."/>
            <person name="Bonatto S."/>
            <person name="Bordignon J."/>
            <person name="Brigido M.M."/>
            <person name="Brito C.A."/>
            <person name="Brocchi M."/>
            <person name="Burity H.A."/>
            <person name="Camargo A.A."/>
            <person name="Cardoso D.D.P."/>
            <person name="Carneiro N.P."/>
            <person name="Carraro D.M."/>
            <person name="Carvalho C.M.B."/>
            <person name="Cascardo J.C.M."/>
            <person name="Cavada B.S."/>
            <person name="Chueire L.M.O."/>
            <person name="Creczynski-Pasa T.B."/>
            <person name="Cunha-Junior N.C."/>
            <person name="Fagundes N."/>
            <person name="Falcao C.L."/>
            <person name="Fantinatti F."/>
            <person name="Farias I.P."/>
            <person name="Felipe M.S.S."/>
            <person name="Ferrari L.P."/>
            <person name="Ferro J.A."/>
            <person name="Ferro M.I.T."/>
            <person name="Franco G.R."/>
            <person name="Freitas N.S.A."/>
            <person name="Furlan L.R."/>
            <person name="Gazzinelli R.T."/>
            <person name="Gomes E.A."/>
            <person name="Goncalves P.R."/>
            <person name="Grangeiro T.B."/>
            <person name="Grattapaglia D."/>
            <person name="Grisard E.C."/>
            <person name="Hanna E.S."/>
            <person name="Jardim S.N."/>
            <person name="Laurino J."/>
            <person name="Leoi L.C.T."/>
            <person name="Lima L.F.A."/>
            <person name="Loureiro M.F."/>
            <person name="Lyra M.C.C.P."/>
            <person name="Madeira H.M.F."/>
            <person name="Manfio G.P."/>
            <person name="Maranhao A.Q."/>
            <person name="Martins W.S."/>
            <person name="di Mauro S.M.Z."/>
            <person name="de Medeiros S.R.B."/>
            <person name="Meissner R.V."/>
            <person name="Moreira M.A.M."/>
            <person name="Nascimento F.F."/>
            <person name="Nicolas M.F."/>
            <person name="Oliveira J.G."/>
            <person name="Oliveira S.C."/>
            <person name="Paixao R.F.C."/>
            <person name="Parente J.A."/>
            <person name="Pedrosa F.O."/>
            <person name="Pena S.D.J."/>
            <person name="Pereira J.O."/>
            <person name="Pereira M."/>
            <person name="Pinto L.S.R.C."/>
            <person name="Pinto L.S."/>
            <person name="Porto J.I.R."/>
            <person name="Potrich D.P."/>
            <person name="Ramalho-Neto C.E."/>
            <person name="Reis A.M.M."/>
            <person name="Rigo L.U."/>
            <person name="Rondinelli E."/>
            <person name="Santos E.B.P."/>
            <person name="Santos F.R."/>
            <person name="Schneider M.P.C."/>
            <person name="Seuanez H.N."/>
            <person name="Silva A.M.R."/>
            <person name="da Silva A.L.C."/>
            <person name="Silva D.W."/>
            <person name="Silva R."/>
            <person name="Simoes I.C."/>
            <person name="Simon D."/>
            <person name="Soares C.M.A."/>
            <person name="Soares R.B.A."/>
            <person name="Souza E.M."/>
            <person name="Souza K.R.L."/>
            <person name="Souza R.C."/>
            <person name="Steffens M.B.R."/>
            <person name="Steindel M."/>
            <person name="Teixeira S.R."/>
            <person name="Urmenyi T."/>
            <person name="Vettore A."/>
            <person name="Wassem R."/>
            <person name="Zaha A."/>
            <person name="Simpson A.J.G."/>
        </authorList>
    </citation>
    <scope>NUCLEOTIDE SEQUENCE [LARGE SCALE GENOMIC DNA]</scope>
    <source>
        <strain>ATCC 12472 / DSM 30191 / JCM 1249 / CCUG 213 / NBRC 12614 / NCIMB 9131 / NCTC 9757 / MK</strain>
    </source>
</reference>
<evidence type="ECO:0000255" key="1">
    <source>
        <dbReference type="HAMAP-Rule" id="MF_00480"/>
    </source>
</evidence>
<evidence type="ECO:0000305" key="2"/>
<sequence>MPRRREVPKREILPDPKFGSQDLSKFMNVVMIDGKKSVAERIIYGALEQIEKKTGKNAIEVFNTALSNAKPVVEVKSRRVGGANYQVPVEVRPSRRMALAMRWLRDAARKRGEKSMDLRLAGELIDAAEGRGGAMKKRDEVHRMAEANKAFSHFRF</sequence>
<feature type="chain" id="PRO_0000124248" description="Small ribosomal subunit protein uS7">
    <location>
        <begin position="1"/>
        <end position="156"/>
    </location>
</feature>
<name>RS7_CHRVO</name>
<keyword id="KW-1185">Reference proteome</keyword>
<keyword id="KW-0687">Ribonucleoprotein</keyword>
<keyword id="KW-0689">Ribosomal protein</keyword>
<keyword id="KW-0694">RNA-binding</keyword>
<keyword id="KW-0699">rRNA-binding</keyword>
<keyword id="KW-0820">tRNA-binding</keyword>
<comment type="function">
    <text evidence="1">One of the primary rRNA binding proteins, it binds directly to 16S rRNA where it nucleates assembly of the head domain of the 30S subunit. Is located at the subunit interface close to the decoding center, probably blocks exit of the E-site tRNA.</text>
</comment>
<comment type="subunit">
    <text evidence="1">Part of the 30S ribosomal subunit. Contacts proteins S9 and S11.</text>
</comment>
<comment type="similarity">
    <text evidence="1">Belongs to the universal ribosomal protein uS7 family.</text>
</comment>
<gene>
    <name evidence="1" type="primary">rpsG</name>
    <name type="ordered locus">CV_4190</name>
</gene>
<protein>
    <recommendedName>
        <fullName evidence="1">Small ribosomal subunit protein uS7</fullName>
    </recommendedName>
    <alternativeName>
        <fullName evidence="2">30S ribosomal protein S7</fullName>
    </alternativeName>
</protein>
<proteinExistence type="inferred from homology"/>
<organism>
    <name type="scientific">Chromobacterium violaceum (strain ATCC 12472 / DSM 30191 / JCM 1249 / CCUG 213 / NBRC 12614 / NCIMB 9131 / NCTC 9757 / MK)</name>
    <dbReference type="NCBI Taxonomy" id="243365"/>
    <lineage>
        <taxon>Bacteria</taxon>
        <taxon>Pseudomonadati</taxon>
        <taxon>Pseudomonadota</taxon>
        <taxon>Betaproteobacteria</taxon>
        <taxon>Neisseriales</taxon>
        <taxon>Chromobacteriaceae</taxon>
        <taxon>Chromobacterium</taxon>
    </lineage>
</organism>
<dbReference type="EMBL" id="AE016825">
    <property type="protein sequence ID" value="AAQ61850.1"/>
    <property type="molecule type" value="Genomic_DNA"/>
</dbReference>
<dbReference type="RefSeq" id="WP_011137737.1">
    <property type="nucleotide sequence ID" value="NC_005085.1"/>
</dbReference>
<dbReference type="SMR" id="Q7NQE9"/>
<dbReference type="STRING" id="243365.CV_4190"/>
<dbReference type="GeneID" id="66366338"/>
<dbReference type="KEGG" id="cvi:CV_4190"/>
<dbReference type="eggNOG" id="COG0049">
    <property type="taxonomic scope" value="Bacteria"/>
</dbReference>
<dbReference type="HOGENOM" id="CLU_072226_1_1_4"/>
<dbReference type="OrthoDB" id="9807653at2"/>
<dbReference type="Proteomes" id="UP000001424">
    <property type="component" value="Chromosome"/>
</dbReference>
<dbReference type="GO" id="GO:0015935">
    <property type="term" value="C:small ribosomal subunit"/>
    <property type="evidence" value="ECO:0007669"/>
    <property type="project" value="InterPro"/>
</dbReference>
<dbReference type="GO" id="GO:0019843">
    <property type="term" value="F:rRNA binding"/>
    <property type="evidence" value="ECO:0007669"/>
    <property type="project" value="UniProtKB-UniRule"/>
</dbReference>
<dbReference type="GO" id="GO:0003735">
    <property type="term" value="F:structural constituent of ribosome"/>
    <property type="evidence" value="ECO:0007669"/>
    <property type="project" value="InterPro"/>
</dbReference>
<dbReference type="GO" id="GO:0000049">
    <property type="term" value="F:tRNA binding"/>
    <property type="evidence" value="ECO:0007669"/>
    <property type="project" value="UniProtKB-UniRule"/>
</dbReference>
<dbReference type="GO" id="GO:0006412">
    <property type="term" value="P:translation"/>
    <property type="evidence" value="ECO:0007669"/>
    <property type="project" value="UniProtKB-UniRule"/>
</dbReference>
<dbReference type="CDD" id="cd14869">
    <property type="entry name" value="uS7_Bacteria"/>
    <property type="match status" value="1"/>
</dbReference>
<dbReference type="FunFam" id="1.10.455.10:FF:000001">
    <property type="entry name" value="30S ribosomal protein S7"/>
    <property type="match status" value="1"/>
</dbReference>
<dbReference type="Gene3D" id="1.10.455.10">
    <property type="entry name" value="Ribosomal protein S7 domain"/>
    <property type="match status" value="1"/>
</dbReference>
<dbReference type="HAMAP" id="MF_00480_B">
    <property type="entry name" value="Ribosomal_uS7_B"/>
    <property type="match status" value="1"/>
</dbReference>
<dbReference type="InterPro" id="IPR000235">
    <property type="entry name" value="Ribosomal_uS7"/>
</dbReference>
<dbReference type="InterPro" id="IPR005717">
    <property type="entry name" value="Ribosomal_uS7_bac/org-type"/>
</dbReference>
<dbReference type="InterPro" id="IPR020606">
    <property type="entry name" value="Ribosomal_uS7_CS"/>
</dbReference>
<dbReference type="InterPro" id="IPR023798">
    <property type="entry name" value="Ribosomal_uS7_dom"/>
</dbReference>
<dbReference type="InterPro" id="IPR036823">
    <property type="entry name" value="Ribosomal_uS7_dom_sf"/>
</dbReference>
<dbReference type="NCBIfam" id="TIGR01029">
    <property type="entry name" value="rpsG_bact"/>
    <property type="match status" value="1"/>
</dbReference>
<dbReference type="PANTHER" id="PTHR11205">
    <property type="entry name" value="RIBOSOMAL PROTEIN S7"/>
    <property type="match status" value="1"/>
</dbReference>
<dbReference type="Pfam" id="PF00177">
    <property type="entry name" value="Ribosomal_S7"/>
    <property type="match status" value="1"/>
</dbReference>
<dbReference type="PIRSF" id="PIRSF002122">
    <property type="entry name" value="RPS7p_RPS7a_RPS5e_RPS7o"/>
    <property type="match status" value="1"/>
</dbReference>
<dbReference type="SUPFAM" id="SSF47973">
    <property type="entry name" value="Ribosomal protein S7"/>
    <property type="match status" value="1"/>
</dbReference>
<dbReference type="PROSITE" id="PS00052">
    <property type="entry name" value="RIBOSOMAL_S7"/>
    <property type="match status" value="1"/>
</dbReference>
<accession>Q7NQE9</accession>